<organism>
    <name type="scientific">Bradyrhizobium diazoefficiens (strain JCM 10833 / BCRC 13528 / IAM 13628 / NBRC 14792 / USDA 110)</name>
    <dbReference type="NCBI Taxonomy" id="224911"/>
    <lineage>
        <taxon>Bacteria</taxon>
        <taxon>Pseudomonadati</taxon>
        <taxon>Pseudomonadota</taxon>
        <taxon>Alphaproteobacteria</taxon>
        <taxon>Hyphomicrobiales</taxon>
        <taxon>Nitrobacteraceae</taxon>
        <taxon>Bradyrhizobium</taxon>
    </lineage>
</organism>
<feature type="chain" id="PRO_0000126158" description="Large ribosomal subunit protein bL36">
    <location>
        <begin position="1"/>
        <end position="41"/>
    </location>
</feature>
<protein>
    <recommendedName>
        <fullName evidence="1">Large ribosomal subunit protein bL36</fullName>
    </recommendedName>
    <alternativeName>
        <fullName evidence="2">50S ribosomal protein L36</fullName>
    </alternativeName>
</protein>
<keyword id="KW-1185">Reference proteome</keyword>
<keyword id="KW-0687">Ribonucleoprotein</keyword>
<keyword id="KW-0689">Ribosomal protein</keyword>
<sequence length="41" mass="4990">MKVRNSLKSLRGRHRANRLVRRKGRVYVINKVQRRFKARQG</sequence>
<name>RL36_BRADU</name>
<proteinExistence type="inferred from homology"/>
<comment type="similarity">
    <text evidence="1">Belongs to the bacterial ribosomal protein bL36 family.</text>
</comment>
<gene>
    <name evidence="1" type="primary">rpmJ</name>
    <name type="ordered locus">bsl7548</name>
</gene>
<evidence type="ECO:0000255" key="1">
    <source>
        <dbReference type="HAMAP-Rule" id="MF_00251"/>
    </source>
</evidence>
<evidence type="ECO:0000305" key="2"/>
<accession>Q89D92</accession>
<dbReference type="EMBL" id="BA000040">
    <property type="protein sequence ID" value="BAC52813.1"/>
    <property type="molecule type" value="Genomic_DNA"/>
</dbReference>
<dbReference type="RefSeq" id="NP_774188.1">
    <property type="nucleotide sequence ID" value="NC_004463.1"/>
</dbReference>
<dbReference type="SMR" id="Q89D92"/>
<dbReference type="FunCoup" id="Q89D92">
    <property type="interactions" value="57"/>
</dbReference>
<dbReference type="STRING" id="224911.AAV28_35420"/>
<dbReference type="EnsemblBacteria" id="BAC52813">
    <property type="protein sequence ID" value="BAC52813"/>
    <property type="gene ID" value="BAC52813"/>
</dbReference>
<dbReference type="KEGG" id="bja:bsl7548"/>
<dbReference type="PATRIC" id="fig|224911.44.peg.7652"/>
<dbReference type="eggNOG" id="COG0257">
    <property type="taxonomic scope" value="Bacteria"/>
</dbReference>
<dbReference type="HOGENOM" id="CLU_135723_3_0_5"/>
<dbReference type="InParanoid" id="Q89D92"/>
<dbReference type="OrthoDB" id="9801558at2"/>
<dbReference type="PhylomeDB" id="Q89D92"/>
<dbReference type="PRO" id="PR:Q89D92"/>
<dbReference type="Proteomes" id="UP000002526">
    <property type="component" value="Chromosome"/>
</dbReference>
<dbReference type="GO" id="GO:1990904">
    <property type="term" value="C:ribonucleoprotein complex"/>
    <property type="evidence" value="ECO:0007669"/>
    <property type="project" value="UniProtKB-KW"/>
</dbReference>
<dbReference type="GO" id="GO:0005840">
    <property type="term" value="C:ribosome"/>
    <property type="evidence" value="ECO:0007669"/>
    <property type="project" value="UniProtKB-KW"/>
</dbReference>
<dbReference type="GO" id="GO:0003735">
    <property type="term" value="F:structural constituent of ribosome"/>
    <property type="evidence" value="ECO:0007669"/>
    <property type="project" value="InterPro"/>
</dbReference>
<dbReference type="GO" id="GO:0006412">
    <property type="term" value="P:translation"/>
    <property type="evidence" value="ECO:0007669"/>
    <property type="project" value="UniProtKB-UniRule"/>
</dbReference>
<dbReference type="HAMAP" id="MF_00251">
    <property type="entry name" value="Ribosomal_bL36"/>
    <property type="match status" value="1"/>
</dbReference>
<dbReference type="InterPro" id="IPR000473">
    <property type="entry name" value="Ribosomal_bL36"/>
</dbReference>
<dbReference type="InterPro" id="IPR035977">
    <property type="entry name" value="Ribosomal_bL36_sp"/>
</dbReference>
<dbReference type="InterPro" id="IPR047621">
    <property type="entry name" value="Ribosomal_L36_bact"/>
</dbReference>
<dbReference type="NCBIfam" id="NF002021">
    <property type="entry name" value="PRK00831.1"/>
    <property type="match status" value="1"/>
</dbReference>
<dbReference type="PANTHER" id="PTHR47781">
    <property type="entry name" value="50S RIBOSOMAL PROTEIN L36 2"/>
    <property type="match status" value="1"/>
</dbReference>
<dbReference type="PANTHER" id="PTHR47781:SF1">
    <property type="entry name" value="LARGE RIBOSOMAL SUBUNIT PROTEIN BL36B"/>
    <property type="match status" value="1"/>
</dbReference>
<dbReference type="Pfam" id="PF00444">
    <property type="entry name" value="Ribosomal_L36"/>
    <property type="match status" value="1"/>
</dbReference>
<dbReference type="SUPFAM" id="SSF57840">
    <property type="entry name" value="Ribosomal protein L36"/>
    <property type="match status" value="1"/>
</dbReference>
<dbReference type="PROSITE" id="PS00828">
    <property type="entry name" value="RIBOSOMAL_L36"/>
    <property type="match status" value="1"/>
</dbReference>
<reference key="1">
    <citation type="journal article" date="2002" name="DNA Res.">
        <title>Complete genomic sequence of nitrogen-fixing symbiotic bacterium Bradyrhizobium japonicum USDA110.</title>
        <authorList>
            <person name="Kaneko T."/>
            <person name="Nakamura Y."/>
            <person name="Sato S."/>
            <person name="Minamisawa K."/>
            <person name="Uchiumi T."/>
            <person name="Sasamoto S."/>
            <person name="Watanabe A."/>
            <person name="Idesawa K."/>
            <person name="Iriguchi M."/>
            <person name="Kawashima K."/>
            <person name="Kohara M."/>
            <person name="Matsumoto M."/>
            <person name="Shimpo S."/>
            <person name="Tsuruoka H."/>
            <person name="Wada T."/>
            <person name="Yamada M."/>
            <person name="Tabata S."/>
        </authorList>
    </citation>
    <scope>NUCLEOTIDE SEQUENCE [LARGE SCALE GENOMIC DNA]</scope>
    <source>
        <strain>JCM 10833 / BCRC 13528 / IAM 13628 / NBRC 14792 / USDA 110</strain>
    </source>
</reference>